<feature type="chain" id="PRO_0000093413" description="Probable ABC transporter ECU01_0200/ECU01_1410">
    <location>
        <begin position="1"/>
        <end position="596"/>
    </location>
</feature>
<feature type="transmembrane region" description="Helical" evidence="3">
    <location>
        <begin position="26"/>
        <end position="46"/>
    </location>
</feature>
<feature type="transmembrane region" description="Helical" evidence="3">
    <location>
        <begin position="173"/>
        <end position="193"/>
    </location>
</feature>
<feature type="transmembrane region" description="Helical" evidence="3">
    <location>
        <begin position="289"/>
        <end position="309"/>
    </location>
</feature>
<feature type="domain" description="ABC transmembrane type-1" evidence="3">
    <location>
        <begin position="39"/>
        <end position="318"/>
    </location>
</feature>
<feature type="domain" description="ABC transporter" evidence="2">
    <location>
        <begin position="361"/>
        <end position="593"/>
    </location>
</feature>
<feature type="binding site" evidence="1">
    <location>
        <position position="370"/>
    </location>
    <ligand>
        <name>ATP</name>
        <dbReference type="ChEBI" id="CHEBI:30616"/>
    </ligand>
</feature>
<feature type="binding site" evidence="2">
    <location>
        <begin position="400"/>
        <end position="411"/>
    </location>
    <ligand>
        <name>ATP</name>
        <dbReference type="ChEBI" id="CHEBI:30616"/>
    </ligand>
</feature>
<evidence type="ECO:0000250" key="1"/>
<evidence type="ECO:0000255" key="2">
    <source>
        <dbReference type="PROSITE-ProRule" id="PRU00434"/>
    </source>
</evidence>
<evidence type="ECO:0000255" key="3">
    <source>
        <dbReference type="PROSITE-ProRule" id="PRU00441"/>
    </source>
</evidence>
<evidence type="ECO:0000305" key="4"/>
<protein>
    <recommendedName>
        <fullName>Probable ABC transporter ECU01_0200/ECU01_1410</fullName>
    </recommendedName>
</protein>
<accession>Q8SQI5</accession>
<proteinExistence type="inferred from homology"/>
<organism>
    <name type="scientific">Encephalitozoon cuniculi (strain GB-M1)</name>
    <name type="common">Microsporidian parasite</name>
    <dbReference type="NCBI Taxonomy" id="284813"/>
    <lineage>
        <taxon>Eukaryota</taxon>
        <taxon>Fungi</taxon>
        <taxon>Fungi incertae sedis</taxon>
        <taxon>Microsporidia</taxon>
        <taxon>Unikaryonidae</taxon>
        <taxon>Encephalitozoon</taxon>
    </lineage>
</organism>
<dbReference type="EMBL" id="AL391737">
    <property type="protein sequence ID" value="CAD24890.1"/>
    <property type="molecule type" value="Genomic_DNA"/>
</dbReference>
<dbReference type="EMBL" id="AL391737">
    <property type="protein sequence ID" value="CAD25014.1"/>
    <property type="molecule type" value="Genomic_DNA"/>
</dbReference>
<dbReference type="RefSeq" id="NP_001402106.1">
    <property type="nucleotide sequence ID" value="NM_001415277.1"/>
</dbReference>
<dbReference type="RefSeq" id="XP_965855.1">
    <property type="nucleotide sequence ID" value="XM_960762.1"/>
</dbReference>
<dbReference type="RefSeq" id="XP_965979.1">
    <property type="nucleotide sequence ID" value="XM_960886.1"/>
</dbReference>
<dbReference type="SMR" id="Q8SQI5"/>
<dbReference type="STRING" id="284813.Q8SQI5"/>
<dbReference type="GeneID" id="860194"/>
<dbReference type="VEuPathDB" id="MicrosporidiaDB:ECU01_0200"/>
<dbReference type="VEuPathDB" id="MicrosporidiaDB:ECU01_1410"/>
<dbReference type="HOGENOM" id="CLU_000604_84_1_1"/>
<dbReference type="InParanoid" id="Q8SQI5"/>
<dbReference type="OMA" id="XDAVLFH"/>
<dbReference type="OrthoDB" id="6500128at2759"/>
<dbReference type="Proteomes" id="UP000000819">
    <property type="component" value="Chromosome I"/>
</dbReference>
<dbReference type="GO" id="GO:0016020">
    <property type="term" value="C:membrane"/>
    <property type="evidence" value="ECO:0007669"/>
    <property type="project" value="UniProtKB-SubCell"/>
</dbReference>
<dbReference type="GO" id="GO:0140359">
    <property type="term" value="F:ABC-type transporter activity"/>
    <property type="evidence" value="ECO:0007669"/>
    <property type="project" value="InterPro"/>
</dbReference>
<dbReference type="GO" id="GO:0005524">
    <property type="term" value="F:ATP binding"/>
    <property type="evidence" value="ECO:0007669"/>
    <property type="project" value="UniProtKB-KW"/>
</dbReference>
<dbReference type="GO" id="GO:0016887">
    <property type="term" value="F:ATP hydrolysis activity"/>
    <property type="evidence" value="ECO:0007669"/>
    <property type="project" value="InterPro"/>
</dbReference>
<dbReference type="Gene3D" id="1.20.1560.10">
    <property type="entry name" value="ABC transporter type 1, transmembrane domain"/>
    <property type="match status" value="1"/>
</dbReference>
<dbReference type="Gene3D" id="3.40.50.300">
    <property type="entry name" value="P-loop containing nucleotide triphosphate hydrolases"/>
    <property type="match status" value="1"/>
</dbReference>
<dbReference type="InterPro" id="IPR003593">
    <property type="entry name" value="AAA+_ATPase"/>
</dbReference>
<dbReference type="InterPro" id="IPR011527">
    <property type="entry name" value="ABC1_TM_dom"/>
</dbReference>
<dbReference type="InterPro" id="IPR036640">
    <property type="entry name" value="ABC1_TM_sf"/>
</dbReference>
<dbReference type="InterPro" id="IPR003439">
    <property type="entry name" value="ABC_transporter-like_ATP-bd"/>
</dbReference>
<dbReference type="InterPro" id="IPR017871">
    <property type="entry name" value="ABC_transporter-like_CS"/>
</dbReference>
<dbReference type="InterPro" id="IPR027417">
    <property type="entry name" value="P-loop_NTPase"/>
</dbReference>
<dbReference type="InterPro" id="IPR039421">
    <property type="entry name" value="Type_1_exporter"/>
</dbReference>
<dbReference type="PANTHER" id="PTHR24221">
    <property type="entry name" value="ATP-BINDING CASSETTE SUB-FAMILY B"/>
    <property type="match status" value="1"/>
</dbReference>
<dbReference type="PANTHER" id="PTHR24221:SF654">
    <property type="entry name" value="ATP-BINDING CASSETTE SUB-FAMILY B MEMBER 6"/>
    <property type="match status" value="1"/>
</dbReference>
<dbReference type="Pfam" id="PF00664">
    <property type="entry name" value="ABC_membrane"/>
    <property type="match status" value="1"/>
</dbReference>
<dbReference type="Pfam" id="PF00005">
    <property type="entry name" value="ABC_tran"/>
    <property type="match status" value="1"/>
</dbReference>
<dbReference type="SMART" id="SM00382">
    <property type="entry name" value="AAA"/>
    <property type="match status" value="1"/>
</dbReference>
<dbReference type="SUPFAM" id="SSF90123">
    <property type="entry name" value="ABC transporter transmembrane region"/>
    <property type="match status" value="1"/>
</dbReference>
<dbReference type="SUPFAM" id="SSF52540">
    <property type="entry name" value="P-loop containing nucleoside triphosphate hydrolases"/>
    <property type="match status" value="1"/>
</dbReference>
<dbReference type="PROSITE" id="PS50929">
    <property type="entry name" value="ABC_TM1F"/>
    <property type="match status" value="1"/>
</dbReference>
<dbReference type="PROSITE" id="PS00211">
    <property type="entry name" value="ABC_TRANSPORTER_1"/>
    <property type="match status" value="1"/>
</dbReference>
<dbReference type="PROSITE" id="PS50893">
    <property type="entry name" value="ABC_TRANSPORTER_2"/>
    <property type="match status" value="1"/>
</dbReference>
<name>ABC1_ENCCU</name>
<reference key="1">
    <citation type="journal article" date="2001" name="Genome Res.">
        <title>Sequence and analysis of chromosome I of the amitochondriate intracellular parasite Encephalitozoon cuniculi (Microspora).</title>
        <authorList>
            <person name="Peyret P."/>
            <person name="Katinka M.D."/>
            <person name="Duprat S."/>
            <person name="Duffieux F."/>
            <person name="Barbe V."/>
            <person name="Barbazanges M."/>
            <person name="Weissenbach J."/>
            <person name="Saurin W."/>
            <person name="Vivares C.P."/>
        </authorList>
    </citation>
    <scope>NUCLEOTIDE SEQUENCE [LARGE SCALE GENOMIC DNA]</scope>
    <source>
        <strain>GB-M1</strain>
    </source>
</reference>
<reference key="2">
    <citation type="journal article" date="2001" name="Nature">
        <title>Genome sequence and gene compaction of the eukaryote parasite Encephalitozoon cuniculi.</title>
        <authorList>
            <person name="Katinka M.D."/>
            <person name="Duprat S."/>
            <person name="Cornillot E."/>
            <person name="Metenier G."/>
            <person name="Thomarat F."/>
            <person name="Prensier G."/>
            <person name="Barbe V."/>
            <person name="Peyretaillade E."/>
            <person name="Brottier P."/>
            <person name="Wincker P."/>
            <person name="Delbac F."/>
            <person name="El Alaoui H."/>
            <person name="Peyret P."/>
            <person name="Saurin W."/>
            <person name="Gouy M."/>
            <person name="Weissenbach J."/>
            <person name="Vivares C.P."/>
        </authorList>
    </citation>
    <scope>NUCLEOTIDE SEQUENCE [LARGE SCALE GENOMIC DNA]</scope>
    <source>
        <strain>GB-M1</strain>
    </source>
</reference>
<gene>
    <name type="ordered locus">ECU01_0200</name>
</gene>
<gene>
    <name type="ordered locus">ECU01_1410</name>
</gene>
<sequence>MRRMDRWTVCRRLASMARPVSFLEAALMAVVAACIVLGKWFDVMSIKRRGLIINGLKDIKGMGSANVSSIYGDAAAFLVLRTLSSAFTESKAILFSAVTNRVVQASTSRILDLTMHAAHSCEIKPTELNRIVERGNRKISKVLVKTLTVATPALFRLALLFREVHAMFGPKYLVPILFTAAAYAAYTCVMLRIRARYRKEINNADNSVSRRIHECVSNVDLVRACCSEQFEVSRLAGEMETMWALKLSDKGCVGMTNLGQRALFSVLFVHVAFKGIADMAALRMTVGDLSVLFSFVLSIDASMWTLGGIARDLGFWLTDCTDLLCLHDGLERAAEQGPGAGAAAEGMAACPSSPPGEAAAVEFDDVSFAYPRSAAYPRSAHVLSGVSFRIMRGERVGIIGRPGSGKSTILRLILMLHRHKGRIRVNGAELWSASPRAVRGSIGCILQDGLLFDESILYNVMYGCPRAGFHRVLRECKNAGLSDVVRRKGLHSRMKALSGGEMQMVSLARCFLKDAPLMLLDEATSKLDAETERDVFGLMMGMRGKTIVMVLHDLWMTEHLDRVILVDSGTVKEVGTHSELMGLRGMYWRMKTASRE</sequence>
<comment type="subcellular location">
    <subcellularLocation>
        <location evidence="3">Membrane</location>
        <topology evidence="3">Multi-pass membrane protein</topology>
    </subcellularLocation>
</comment>
<comment type="similarity">
    <text evidence="4">Belongs to the ABC transporter superfamily. ABCB family. Heavy Metal importer (TC 3.A.1.210) subfamily.</text>
</comment>
<keyword id="KW-0067">ATP-binding</keyword>
<keyword id="KW-0472">Membrane</keyword>
<keyword id="KW-0547">Nucleotide-binding</keyword>
<keyword id="KW-1185">Reference proteome</keyword>
<keyword id="KW-0812">Transmembrane</keyword>
<keyword id="KW-1133">Transmembrane helix</keyword>
<keyword id="KW-0813">Transport</keyword>